<name>LEXA_MYCTO</name>
<evidence type="ECO:0000250" key="1"/>
<evidence type="ECO:0000255" key="2">
    <source>
        <dbReference type="HAMAP-Rule" id="MF_00015"/>
    </source>
</evidence>
<evidence type="ECO:0000256" key="3">
    <source>
        <dbReference type="SAM" id="MobiDB-lite"/>
    </source>
</evidence>
<evidence type="ECO:0000305" key="4"/>
<reference key="1">
    <citation type="journal article" date="2002" name="J. Bacteriol.">
        <title>Whole-genome comparison of Mycobacterium tuberculosis clinical and laboratory strains.</title>
        <authorList>
            <person name="Fleischmann R.D."/>
            <person name="Alland D."/>
            <person name="Eisen J.A."/>
            <person name="Carpenter L."/>
            <person name="White O."/>
            <person name="Peterson J.D."/>
            <person name="DeBoy R.T."/>
            <person name="Dodson R.J."/>
            <person name="Gwinn M.L."/>
            <person name="Haft D.H."/>
            <person name="Hickey E.K."/>
            <person name="Kolonay J.F."/>
            <person name="Nelson W.C."/>
            <person name="Umayam L.A."/>
            <person name="Ermolaeva M.D."/>
            <person name="Salzberg S.L."/>
            <person name="Delcher A."/>
            <person name="Utterback T.R."/>
            <person name="Weidman J.F."/>
            <person name="Khouri H.M."/>
            <person name="Gill J."/>
            <person name="Mikula A."/>
            <person name="Bishai W."/>
            <person name="Jacobs W.R. Jr."/>
            <person name="Venter J.C."/>
            <person name="Fraser C.M."/>
        </authorList>
    </citation>
    <scope>NUCLEOTIDE SEQUENCE [LARGE SCALE GENOMIC DNA]</scope>
    <source>
        <strain>CDC 1551 / Oshkosh</strain>
    </source>
</reference>
<protein>
    <recommendedName>
        <fullName evidence="2">LexA repressor</fullName>
        <ecNumber evidence="2">3.4.21.88</ecNumber>
    </recommendedName>
</protein>
<comment type="function">
    <text evidence="1">Represses a number of genes involved in the response to DNA damage (SOS response).</text>
</comment>
<comment type="catalytic activity">
    <reaction evidence="2">
        <text>Hydrolysis of Ala-|-Gly bond in repressor LexA.</text>
        <dbReference type="EC" id="3.4.21.88"/>
    </reaction>
</comment>
<comment type="subunit">
    <text evidence="2">Homodimer.</text>
</comment>
<comment type="similarity">
    <text evidence="2">Belongs to the peptidase S24 family.</text>
</comment>
<comment type="sequence caution" evidence="4">
    <conflict type="erroneous initiation">
        <sequence resource="EMBL-CDS" id="AAK47109"/>
    </conflict>
    <text>Truncated N-terminus.</text>
</comment>
<sequence>MNDSNDTSVAGGAAGADSRVLSADSALTERQRTILDVIRASVTSRGYPPSIREIGDAVGLTSTSSVAHQLRTLERKGYLRRDPNRPRAVNVRGADDAALPPVTEVAGSDALPEPTFVPVLGRIAAGGPILAEEAVEDVFPLPRELVGEGTLFLLKVIGDSMVEAAICDGDWVVVRQQNVADNGDIVAAMIDGEATVKTFKRAGGQVWLMPHNPAFDPIPGNDATVLGKVVTVIRKV</sequence>
<accession>P9WHR6</accession>
<accession>L0TD53</accession>
<accession>O08191</accession>
<accession>Q50765</accession>
<organism>
    <name type="scientific">Mycobacterium tuberculosis (strain CDC 1551 / Oshkosh)</name>
    <dbReference type="NCBI Taxonomy" id="83331"/>
    <lineage>
        <taxon>Bacteria</taxon>
        <taxon>Bacillati</taxon>
        <taxon>Actinomycetota</taxon>
        <taxon>Actinomycetes</taxon>
        <taxon>Mycobacteriales</taxon>
        <taxon>Mycobacteriaceae</taxon>
        <taxon>Mycobacterium</taxon>
        <taxon>Mycobacterium tuberculosis complex</taxon>
    </lineage>
</organism>
<feature type="chain" id="PRO_0000428136" description="LexA repressor">
    <location>
        <begin position="1"/>
        <end position="236"/>
    </location>
</feature>
<feature type="DNA-binding region" description="H-T-H motif" evidence="2">
    <location>
        <begin position="51"/>
        <end position="71"/>
    </location>
</feature>
<feature type="region of interest" description="Disordered" evidence="3">
    <location>
        <begin position="1"/>
        <end position="25"/>
    </location>
</feature>
<feature type="active site" description="For autocatalytic cleavage activity" evidence="2">
    <location>
        <position position="160"/>
    </location>
</feature>
<feature type="active site" description="For autocatalytic cleavage activity" evidence="2">
    <location>
        <position position="197"/>
    </location>
</feature>
<feature type="site" description="Cleavage; by autolysis" evidence="2">
    <location>
        <begin position="125"/>
        <end position="126"/>
    </location>
</feature>
<gene>
    <name evidence="2" type="primary">lexA</name>
    <name type="ordered locus">MT2793</name>
</gene>
<proteinExistence type="inferred from homology"/>
<keyword id="KW-0068">Autocatalytic cleavage</keyword>
<keyword id="KW-0227">DNA damage</keyword>
<keyword id="KW-0234">DNA repair</keyword>
<keyword id="KW-0235">DNA replication</keyword>
<keyword id="KW-0238">DNA-binding</keyword>
<keyword id="KW-0378">Hydrolase</keyword>
<keyword id="KW-1185">Reference proteome</keyword>
<keyword id="KW-0678">Repressor</keyword>
<keyword id="KW-0742">SOS response</keyword>
<keyword id="KW-0804">Transcription</keyword>
<keyword id="KW-0805">Transcription regulation</keyword>
<dbReference type="EC" id="3.4.21.88" evidence="2"/>
<dbReference type="EMBL" id="AE000516">
    <property type="protein sequence ID" value="AAK47109.1"/>
    <property type="status" value="ALT_INIT"/>
    <property type="molecule type" value="Genomic_DNA"/>
</dbReference>
<dbReference type="PIR" id="C70533">
    <property type="entry name" value="C70533"/>
</dbReference>
<dbReference type="RefSeq" id="WP_003899448.1">
    <property type="nucleotide sequence ID" value="NZ_KK341227.1"/>
</dbReference>
<dbReference type="SMR" id="P9WHR6"/>
<dbReference type="MEROPS" id="S24.001"/>
<dbReference type="GeneID" id="45426707"/>
<dbReference type="KEGG" id="mtc:MT2793"/>
<dbReference type="PATRIC" id="fig|83331.31.peg.3008"/>
<dbReference type="HOGENOM" id="CLU_066192_45_0_11"/>
<dbReference type="Proteomes" id="UP000001020">
    <property type="component" value="Chromosome"/>
</dbReference>
<dbReference type="GO" id="GO:0003677">
    <property type="term" value="F:DNA binding"/>
    <property type="evidence" value="ECO:0007669"/>
    <property type="project" value="UniProtKB-UniRule"/>
</dbReference>
<dbReference type="GO" id="GO:0004252">
    <property type="term" value="F:serine-type endopeptidase activity"/>
    <property type="evidence" value="ECO:0007669"/>
    <property type="project" value="UniProtKB-UniRule"/>
</dbReference>
<dbReference type="GO" id="GO:0006281">
    <property type="term" value="P:DNA repair"/>
    <property type="evidence" value="ECO:0007669"/>
    <property type="project" value="UniProtKB-UniRule"/>
</dbReference>
<dbReference type="GO" id="GO:0006260">
    <property type="term" value="P:DNA replication"/>
    <property type="evidence" value="ECO:0007669"/>
    <property type="project" value="UniProtKB-UniRule"/>
</dbReference>
<dbReference type="GO" id="GO:0045892">
    <property type="term" value="P:negative regulation of DNA-templated transcription"/>
    <property type="evidence" value="ECO:0007669"/>
    <property type="project" value="UniProtKB-UniRule"/>
</dbReference>
<dbReference type="GO" id="GO:0006508">
    <property type="term" value="P:proteolysis"/>
    <property type="evidence" value="ECO:0007669"/>
    <property type="project" value="InterPro"/>
</dbReference>
<dbReference type="GO" id="GO:0009432">
    <property type="term" value="P:SOS response"/>
    <property type="evidence" value="ECO:0007669"/>
    <property type="project" value="UniProtKB-UniRule"/>
</dbReference>
<dbReference type="CDD" id="cd06529">
    <property type="entry name" value="S24_LexA-like"/>
    <property type="match status" value="1"/>
</dbReference>
<dbReference type="FunFam" id="1.10.10.10:FF:000009">
    <property type="entry name" value="LexA repressor"/>
    <property type="match status" value="1"/>
</dbReference>
<dbReference type="FunFam" id="2.10.109.10:FF:000001">
    <property type="entry name" value="LexA repressor"/>
    <property type="match status" value="1"/>
</dbReference>
<dbReference type="Gene3D" id="2.10.109.10">
    <property type="entry name" value="Umud Fragment, subunit A"/>
    <property type="match status" value="1"/>
</dbReference>
<dbReference type="Gene3D" id="1.10.10.10">
    <property type="entry name" value="Winged helix-like DNA-binding domain superfamily/Winged helix DNA-binding domain"/>
    <property type="match status" value="1"/>
</dbReference>
<dbReference type="HAMAP" id="MF_00015">
    <property type="entry name" value="LexA"/>
    <property type="match status" value="1"/>
</dbReference>
<dbReference type="InterPro" id="IPR006200">
    <property type="entry name" value="LexA"/>
</dbReference>
<dbReference type="InterPro" id="IPR039418">
    <property type="entry name" value="LexA-like"/>
</dbReference>
<dbReference type="InterPro" id="IPR036286">
    <property type="entry name" value="LexA/Signal_pep-like_sf"/>
</dbReference>
<dbReference type="InterPro" id="IPR006199">
    <property type="entry name" value="LexA_DNA-bd_dom"/>
</dbReference>
<dbReference type="InterPro" id="IPR050077">
    <property type="entry name" value="LexA_repressor"/>
</dbReference>
<dbReference type="InterPro" id="IPR006197">
    <property type="entry name" value="Peptidase_S24_LexA"/>
</dbReference>
<dbReference type="InterPro" id="IPR015927">
    <property type="entry name" value="Peptidase_S24_S26A/B/C"/>
</dbReference>
<dbReference type="InterPro" id="IPR036388">
    <property type="entry name" value="WH-like_DNA-bd_sf"/>
</dbReference>
<dbReference type="InterPro" id="IPR036390">
    <property type="entry name" value="WH_DNA-bd_sf"/>
</dbReference>
<dbReference type="NCBIfam" id="TIGR00498">
    <property type="entry name" value="lexA"/>
    <property type="match status" value="1"/>
</dbReference>
<dbReference type="PANTHER" id="PTHR33516">
    <property type="entry name" value="LEXA REPRESSOR"/>
    <property type="match status" value="1"/>
</dbReference>
<dbReference type="PANTHER" id="PTHR33516:SF2">
    <property type="entry name" value="LEXA REPRESSOR-RELATED"/>
    <property type="match status" value="1"/>
</dbReference>
<dbReference type="Pfam" id="PF01726">
    <property type="entry name" value="LexA_DNA_bind"/>
    <property type="match status" value="1"/>
</dbReference>
<dbReference type="Pfam" id="PF00717">
    <property type="entry name" value="Peptidase_S24"/>
    <property type="match status" value="1"/>
</dbReference>
<dbReference type="PRINTS" id="PR00726">
    <property type="entry name" value="LEXASERPTASE"/>
</dbReference>
<dbReference type="SUPFAM" id="SSF51306">
    <property type="entry name" value="LexA/Signal peptidase"/>
    <property type="match status" value="1"/>
</dbReference>
<dbReference type="SUPFAM" id="SSF46785">
    <property type="entry name" value="Winged helix' DNA-binding domain"/>
    <property type="match status" value="1"/>
</dbReference>